<sequence>MLGILNKMFDPTKRTLNRYEKIANDIDAIRGDYENLSDDALKHKTIEFKERLEKGATTDDLLVEAFAVVREASRRVTGMFPFKVQLMGGVALHDGNIAEMKTGEGKTLTSTLPVYLNALTGKGVHVVTVNEYLASRDAEQMGKIFEFLGLTVGLNLNSMSKDEKREAYAADITYSTNNELGFDYLRDNMVLYKEQMVQRPLHFAVIDEVDSILIDEARTPLIISGQAAKSTKLYVQANAFVRTLKAEKDYTYDIKTKAVQLTEEGMTKAEKAFGIDNLFDVKHVALNHHINQALKAHVAMQKDVDYVVEDGQVVIVDSFTGRLMKGRRYSEGLHQAIEAKEGLEIQNESMTLATITFQNYFRMYEKLAGMTGTAKTEEEEFRNIYNMQVVTIPTNRPVVRDDRPDLIYRTMEGKFKAVAEDVAQRYMTGQPVLVGTVAVETSELISKLLKNKGIPHQVLNAKNHEREAQIIEEAGQKGAVTIATNMAGRGTDIKLGEGVKELGGLAVVGTERHESRRIDNQLRGRSGRQGDPGITQFYLSMEDELMRRFGAERTMAMLDRFGMDDSTPIQSKMVSRAVESSQKRVEGNNFDSRKQLLQYDDVLRQQREVIYKQRFEVIDSENLREIVENMIKSSLERAIAAYTPREELPEEWKLDGLVDLINTTYLDEGALEKSDIFGKEPDEMLELIMDRIITKYNEKEEQFGKEQMREFEKVIVLRAVDSKWMDHIDAMDQLRQGIHLRAYAQTNPLREYQMEGFAMFEHMIESIEDEVAKFVMKAEIENNLEREEVVQGQTTAHQPQEGDDNKKAKKAPVRKVVDIGRNAPCHCGSGKKYKNCCGRTE</sequence>
<proteinExistence type="evidence at protein level"/>
<evidence type="ECO:0000255" key="1">
    <source>
        <dbReference type="HAMAP-Rule" id="MF_01382"/>
    </source>
</evidence>
<evidence type="ECO:0000256" key="2">
    <source>
        <dbReference type="SAM" id="MobiDB-lite"/>
    </source>
</evidence>
<evidence type="ECO:0000269" key="3">
    <source>
    </source>
</evidence>
<evidence type="ECO:0000269" key="4">
    <source>
    </source>
</evidence>
<evidence type="ECO:0000269" key="5">
    <source>
    </source>
</evidence>
<evidence type="ECO:0000269" key="6">
    <source>
    </source>
</evidence>
<evidence type="ECO:0000269" key="7">
    <source>
    </source>
</evidence>
<evidence type="ECO:0000269" key="8">
    <source>
    </source>
</evidence>
<evidence type="ECO:0000269" key="9">
    <source>
    </source>
</evidence>
<evidence type="ECO:0000305" key="10"/>
<evidence type="ECO:0000305" key="11">
    <source>
    </source>
</evidence>
<evidence type="ECO:0007744" key="12">
    <source>
        <dbReference type="PDB" id="1M6N"/>
    </source>
</evidence>
<evidence type="ECO:0007744" key="13">
    <source>
        <dbReference type="PDB" id="1M74"/>
    </source>
</evidence>
<evidence type="ECO:0007744" key="14">
    <source>
        <dbReference type="PDB" id="1TF2"/>
    </source>
</evidence>
<evidence type="ECO:0007744" key="15">
    <source>
        <dbReference type="PDB" id="1TF5"/>
    </source>
</evidence>
<evidence type="ECO:0007744" key="16">
    <source>
        <dbReference type="PDB" id="2IBM"/>
    </source>
</evidence>
<evidence type="ECO:0007744" key="17">
    <source>
        <dbReference type="PDB" id="3DL8"/>
    </source>
</evidence>
<evidence type="ECO:0007744" key="18">
    <source>
        <dbReference type="PDB" id="3JV2"/>
    </source>
</evidence>
<evidence type="ECO:0007829" key="19">
    <source>
        <dbReference type="PDB" id="1M6N"/>
    </source>
</evidence>
<evidence type="ECO:0007829" key="20">
    <source>
        <dbReference type="PDB" id="1TF2"/>
    </source>
</evidence>
<evidence type="ECO:0007829" key="21">
    <source>
        <dbReference type="PDB" id="1TF5"/>
    </source>
</evidence>
<evidence type="ECO:0007829" key="22">
    <source>
        <dbReference type="PDB" id="2IBM"/>
    </source>
</evidence>
<evidence type="ECO:0007829" key="23">
    <source>
        <dbReference type="PDB" id="3IQM"/>
    </source>
</evidence>
<evidence type="ECO:0007829" key="24">
    <source>
        <dbReference type="PDB" id="3IQY"/>
    </source>
</evidence>
<evidence type="ECO:0007829" key="25">
    <source>
        <dbReference type="PDB" id="3JV2"/>
    </source>
</evidence>
<evidence type="ECO:0007829" key="26">
    <source>
        <dbReference type="PDB" id="6ITC"/>
    </source>
</evidence>
<evidence type="ECO:0007829" key="27">
    <source>
        <dbReference type="PDB" id="7XHB"/>
    </source>
</evidence>
<reference key="1">
    <citation type="journal article" date="1991" name="Gene">
        <title>Sequencing reveals similarity of the wild-type div+ gene of Bacillus subtilis to the Escherichia coli secA gene.</title>
        <authorList>
            <person name="Sadaie Y."/>
            <person name="Takamatsu H."/>
            <person name="Nakamura K."/>
            <person name="Yamane K."/>
        </authorList>
    </citation>
    <scope>NUCLEOTIDE SEQUENCE [GENOMIC DNA]</scope>
    <source>
        <strain>168 / Marburg / ATCC 6051 / DSM 10 / JCM 1465 / NBRC 13719 / NCIMB 3610 / NRRL NRS-744 / VKM B-501</strain>
    </source>
</reference>
<reference key="2">
    <citation type="journal article" date="1996" name="Microbiology">
        <title>Sequence of the 305 degrees-307 degrees region of the Bacillus subtilis chromosome.</title>
        <authorList>
            <person name="Soldo B."/>
            <person name="Lazarevic V."/>
            <person name="Mauel C."/>
            <person name="Karamata D."/>
        </authorList>
    </citation>
    <scope>NUCLEOTIDE SEQUENCE [GENOMIC DNA]</scope>
    <source>
        <strain>168</strain>
    </source>
</reference>
<reference key="3">
    <citation type="journal article" date="1997" name="Nature">
        <title>The complete genome sequence of the Gram-positive bacterium Bacillus subtilis.</title>
        <authorList>
            <person name="Kunst F."/>
            <person name="Ogasawara N."/>
            <person name="Moszer I."/>
            <person name="Albertini A.M."/>
            <person name="Alloni G."/>
            <person name="Azevedo V."/>
            <person name="Bertero M.G."/>
            <person name="Bessieres P."/>
            <person name="Bolotin A."/>
            <person name="Borchert S."/>
            <person name="Borriss R."/>
            <person name="Boursier L."/>
            <person name="Brans A."/>
            <person name="Braun M."/>
            <person name="Brignell S.C."/>
            <person name="Bron S."/>
            <person name="Brouillet S."/>
            <person name="Bruschi C.V."/>
            <person name="Caldwell B."/>
            <person name="Capuano V."/>
            <person name="Carter N.M."/>
            <person name="Choi S.-K."/>
            <person name="Codani J.-J."/>
            <person name="Connerton I.F."/>
            <person name="Cummings N.J."/>
            <person name="Daniel R.A."/>
            <person name="Denizot F."/>
            <person name="Devine K.M."/>
            <person name="Duesterhoeft A."/>
            <person name="Ehrlich S.D."/>
            <person name="Emmerson P.T."/>
            <person name="Entian K.-D."/>
            <person name="Errington J."/>
            <person name="Fabret C."/>
            <person name="Ferrari E."/>
            <person name="Foulger D."/>
            <person name="Fritz C."/>
            <person name="Fujita M."/>
            <person name="Fujita Y."/>
            <person name="Fuma S."/>
            <person name="Galizzi A."/>
            <person name="Galleron N."/>
            <person name="Ghim S.-Y."/>
            <person name="Glaser P."/>
            <person name="Goffeau A."/>
            <person name="Golightly E.J."/>
            <person name="Grandi G."/>
            <person name="Guiseppi G."/>
            <person name="Guy B.J."/>
            <person name="Haga K."/>
            <person name="Haiech J."/>
            <person name="Harwood C.R."/>
            <person name="Henaut A."/>
            <person name="Hilbert H."/>
            <person name="Holsappel S."/>
            <person name="Hosono S."/>
            <person name="Hullo M.-F."/>
            <person name="Itaya M."/>
            <person name="Jones L.-M."/>
            <person name="Joris B."/>
            <person name="Karamata D."/>
            <person name="Kasahara Y."/>
            <person name="Klaerr-Blanchard M."/>
            <person name="Klein C."/>
            <person name="Kobayashi Y."/>
            <person name="Koetter P."/>
            <person name="Koningstein G."/>
            <person name="Krogh S."/>
            <person name="Kumano M."/>
            <person name="Kurita K."/>
            <person name="Lapidus A."/>
            <person name="Lardinois S."/>
            <person name="Lauber J."/>
            <person name="Lazarevic V."/>
            <person name="Lee S.-M."/>
            <person name="Levine A."/>
            <person name="Liu H."/>
            <person name="Masuda S."/>
            <person name="Mauel C."/>
            <person name="Medigue C."/>
            <person name="Medina N."/>
            <person name="Mellado R.P."/>
            <person name="Mizuno M."/>
            <person name="Moestl D."/>
            <person name="Nakai S."/>
            <person name="Noback M."/>
            <person name="Noone D."/>
            <person name="O'Reilly M."/>
            <person name="Ogawa K."/>
            <person name="Ogiwara A."/>
            <person name="Oudega B."/>
            <person name="Park S.-H."/>
            <person name="Parro V."/>
            <person name="Pohl T.M."/>
            <person name="Portetelle D."/>
            <person name="Porwollik S."/>
            <person name="Prescott A.M."/>
            <person name="Presecan E."/>
            <person name="Pujic P."/>
            <person name="Purnelle B."/>
            <person name="Rapoport G."/>
            <person name="Rey M."/>
            <person name="Reynolds S."/>
            <person name="Rieger M."/>
            <person name="Rivolta C."/>
            <person name="Rocha E."/>
            <person name="Roche B."/>
            <person name="Rose M."/>
            <person name="Sadaie Y."/>
            <person name="Sato T."/>
            <person name="Scanlan E."/>
            <person name="Schleich S."/>
            <person name="Schroeter R."/>
            <person name="Scoffone F."/>
            <person name="Sekiguchi J."/>
            <person name="Sekowska A."/>
            <person name="Seror S.J."/>
            <person name="Serror P."/>
            <person name="Shin B.-S."/>
            <person name="Soldo B."/>
            <person name="Sorokin A."/>
            <person name="Tacconi E."/>
            <person name="Takagi T."/>
            <person name="Takahashi H."/>
            <person name="Takemaru K."/>
            <person name="Takeuchi M."/>
            <person name="Tamakoshi A."/>
            <person name="Tanaka T."/>
            <person name="Terpstra P."/>
            <person name="Tognoni A."/>
            <person name="Tosato V."/>
            <person name="Uchiyama S."/>
            <person name="Vandenbol M."/>
            <person name="Vannier F."/>
            <person name="Vassarotti A."/>
            <person name="Viari A."/>
            <person name="Wambutt R."/>
            <person name="Wedler E."/>
            <person name="Wedler H."/>
            <person name="Weitzenegger T."/>
            <person name="Winters P."/>
            <person name="Wipat A."/>
            <person name="Yamamoto H."/>
            <person name="Yamane K."/>
            <person name="Yasumoto K."/>
            <person name="Yata K."/>
            <person name="Yoshida K."/>
            <person name="Yoshikawa H.-F."/>
            <person name="Zumstein E."/>
            <person name="Yoshikawa H."/>
            <person name="Danchin A."/>
        </authorList>
    </citation>
    <scope>NUCLEOTIDE SEQUENCE [LARGE SCALE GENOMIC DNA]</scope>
    <source>
        <strain>168</strain>
    </source>
</reference>
<reference key="4">
    <citation type="journal article" date="1991" name="Mol. Gen. Genet.">
        <title>Identification of a gene fragment which codes for the 364 amino-terminal amino acid residues of a SecA homologue from Bacillus subtilis: further evidence for the conservation of the protein export apparatus in Gram-positive and Gram-negative bacteria.</title>
        <authorList>
            <person name="Overhoff B."/>
            <person name="Klein M."/>
            <person name="Spies M."/>
            <person name="Freudl R."/>
        </authorList>
    </citation>
    <scope>NUCLEOTIDE SEQUENCE [GENOMIC DNA] OF 1-364</scope>
</reference>
<reference key="5">
    <citation type="journal article" date="1993" name="J. Biol. Chem.">
        <title>Lysine 106 of the putative catalytic ATP-binding site of the Bacillus subtilis SecA protein is required for functional complementation of Escherichia coli secA mutants in vivo.</title>
        <authorList>
            <person name="Klose M."/>
            <person name="Schimz K.L."/>
            <person name="van der Wolk J."/>
            <person name="Driessen A.J."/>
            <person name="Freudl R."/>
        </authorList>
    </citation>
    <scope>CATALYTIC ACTIVITY</scope>
    <scope>MUTAGENESIS OF LYS-101 AND LYS-106</scope>
</reference>
<reference key="6">
    <citation type="journal article" date="2016" name="PLoS Genet.">
        <title>Super Resolution Fluorescence Microscopy and Tracking of Bacterial Flotillin (Reggie) Paralogs Provide Evidence for Defined-Sized Protein Microdomains within the Bacterial Membrane but Absence of Clusters Containing Detergent-Resistant Proteins.</title>
        <authorList>
            <person name="Dempwolff F."/>
            <person name="Schmidt F.K."/>
            <person name="Hervas A.B."/>
            <person name="Stroh A."/>
            <person name="Roesch T.C."/>
            <person name="Riese C.N."/>
            <person name="Dersch S."/>
            <person name="Heimerl T."/>
            <person name="Lucena D."/>
            <person name="Huelsbusch N."/>
            <person name="Stuermer C.A."/>
            <person name="Takeshita N."/>
            <person name="Fischer R."/>
            <person name="Eckhardt B."/>
            <person name="Graumann P.L."/>
        </authorList>
    </citation>
    <scope>SUBCELLULAR LOCATION</scope>
    <source>
        <strain>168 / PY79</strain>
    </source>
</reference>
<reference evidence="12 13" key="7">
    <citation type="journal article" date="2002" name="Science">
        <title>Nucleotide control of interdomain interactions in the conformational reaction cycle of SecA.</title>
        <authorList>
            <person name="Hunt J.F."/>
            <person name="Weinkauf S."/>
            <person name="Henry L."/>
            <person name="Fak J.J."/>
            <person name="McNicholas P."/>
            <person name="Oliver D.B."/>
            <person name="Deisenhofer J."/>
        </authorList>
    </citation>
    <scope>X-RAY CRYSTALLOGRAPHY (2.7 ANGSTROMS) OF 1-802 (MONOMERIC AND DIMERIC) WITH AND WITHOUT BOUND ADP</scope>
</reference>
<reference evidence="14 15" key="8">
    <citation type="journal article" date="2004" name="Proc. Natl. Acad. Sci. U.S.A.">
        <title>A large conformational change of the translocation ATPase SecA.</title>
        <authorList>
            <person name="Osborne A.R."/>
            <person name="Clemons W.M. Jr."/>
            <person name="Rapoport T.A."/>
        </authorList>
    </citation>
    <scope>X-RAY CRYSTALLOGRAPHY (2.18 ANGSTROMS) OF OPEN MONOMERIC SECA IN COMPLEX WITH ADP</scope>
</reference>
<reference evidence="16" key="9">
    <citation type="journal article" date="2006" name="J. Mol. Biol.">
        <title>A novel dimer interface and conformational changes revealed by an X-ray structure of B. subtilis SecA.</title>
        <authorList>
            <person name="Zimmer J."/>
            <person name="Li W."/>
            <person name="Rapoport T.A."/>
        </authorList>
    </citation>
    <scope>X-RAY CRYSTALLOGRAPHY (3.2 ANGSTROMS) OF 1-780 IN A DIMERIC FORM IN COMPLEX WITH ADP</scope>
    <scope>STUDY OF DIMERIC FORMS</scope>
    <scope>MUTAGENESIS OF GLY-587; ASN-588 AND ARG-750</scope>
</reference>
<reference evidence="17" key="10">
    <citation type="journal article" date="2008" name="Nature">
        <title>Structure of a complex of the ATPase SecA and the protein-translocation channel.</title>
        <authorList>
            <person name="Zimmer J."/>
            <person name="Nam Y."/>
            <person name="Rapoport T.A."/>
        </authorList>
    </citation>
    <scope>X-RAY CRYSTALLOGRAPHY (7.5 ANGSTROMS) OF 1-779 IN COMPLEX WITH SECYEG FROM A.AEOLICUS</scope>
</reference>
<reference evidence="18" key="11">
    <citation type="journal article" date="2009" name="J. Mol. Biol.">
        <title>Conformational flexibility and peptide interaction of the translocation ATPase SecA.</title>
        <authorList>
            <person name="Zimmer J."/>
            <person name="Rapoport T.A."/>
        </authorList>
    </citation>
    <scope>X-RAY CRYSTALLOGRAPHY (2.5 ANGSTROMS) OF 1-780 IN COMPLEX WITH ADP</scope>
</reference>
<feature type="chain" id="PRO_0000109576" description="Protein translocase subunit SecA">
    <location>
        <begin position="1"/>
        <end position="841"/>
    </location>
</feature>
<feature type="region of interest" description="Disordered" evidence="2">
    <location>
        <begin position="786"/>
        <end position="813"/>
    </location>
</feature>
<feature type="binding site" evidence="4 7 14 18">
    <location>
        <begin position="79"/>
        <end position="80"/>
    </location>
    <ligand>
        <name>ATP</name>
        <dbReference type="ChEBI" id="CHEBI:30616"/>
    </ligand>
</feature>
<feature type="binding site" evidence="1 3 4 5 7 13 14 16 18">
    <location>
        <position position="85"/>
    </location>
    <ligand>
        <name>ATP</name>
        <dbReference type="ChEBI" id="CHEBI:30616"/>
    </ligand>
</feature>
<feature type="binding site" evidence="1 3 4 5 7 13 14 16 18">
    <location>
        <begin position="103"/>
        <end position="107"/>
    </location>
    <ligand>
        <name>ATP</name>
        <dbReference type="ChEBI" id="CHEBI:30616"/>
    </ligand>
</feature>
<feature type="binding site" evidence="1 3 4 5 13 14 16">
    <location>
        <position position="492"/>
    </location>
    <ligand>
        <name>ATP</name>
        <dbReference type="ChEBI" id="CHEBI:30616"/>
    </ligand>
</feature>
<feature type="binding site" evidence="1">
    <location>
        <position position="825"/>
    </location>
    <ligand>
        <name>Zn(2+)</name>
        <dbReference type="ChEBI" id="CHEBI:29105"/>
    </ligand>
</feature>
<feature type="binding site" evidence="1">
    <location>
        <position position="827"/>
    </location>
    <ligand>
        <name>Zn(2+)</name>
        <dbReference type="ChEBI" id="CHEBI:29105"/>
    </ligand>
</feature>
<feature type="binding site" evidence="1">
    <location>
        <position position="836"/>
    </location>
    <ligand>
        <name>Zn(2+)</name>
        <dbReference type="ChEBI" id="CHEBI:29105"/>
    </ligand>
</feature>
<feature type="binding site" evidence="1">
    <location>
        <position position="837"/>
    </location>
    <ligand>
        <name>Zn(2+)</name>
        <dbReference type="ChEBI" id="CHEBI:29105"/>
    </ligand>
</feature>
<feature type="mutagenesis site" description="Can restore growth of E.coli secA mutants." evidence="9">
    <original>K</original>
    <variation>N</variation>
    <location>
        <position position="101"/>
    </location>
</feature>
<feature type="mutagenesis site" description="Loss of activity. Cannot complement E.coli secA mutants." evidence="9">
    <original>K</original>
    <variation>N</variation>
    <location>
        <position position="106"/>
    </location>
</feature>
<feature type="mutagenesis site" description="Forms position 587-750 dimers upon oxidation in vitro; when associated with C-750. Does not form position 587-587 dimers (homodimers)." evidence="5">
    <original>G</original>
    <variation>C</variation>
    <location>
        <position position="587"/>
    </location>
</feature>
<feature type="mutagenesis site" description="Forms position 588-588 dimers upon oxidation in vitro (homodimers)." evidence="5">
    <original>N</original>
    <variation>C</variation>
    <location>
        <position position="588"/>
    </location>
</feature>
<feature type="mutagenesis site" description="Forms position 587-750 dimers upon oxidation in vitro; when associated with C-587. Also forms position 750-750 dimers (homodimers)." evidence="5">
    <original>R</original>
    <variation>C</variation>
    <location>
        <position position="750"/>
    </location>
</feature>
<feature type="sequence conflict" description="In Ref. 4; CAA43977." evidence="10" ref="4">
    <original>V</original>
    <variation>I</variation>
    <location>
        <position position="126"/>
    </location>
</feature>
<feature type="helix" evidence="21">
    <location>
        <begin position="1"/>
        <end position="6"/>
    </location>
</feature>
<feature type="strand" evidence="22">
    <location>
        <begin position="12"/>
        <end position="14"/>
    </location>
</feature>
<feature type="helix" evidence="21">
    <location>
        <begin position="18"/>
        <end position="28"/>
    </location>
</feature>
<feature type="helix" evidence="21">
    <location>
        <begin position="31"/>
        <end position="34"/>
    </location>
</feature>
<feature type="helix" evidence="21">
    <location>
        <begin position="38"/>
        <end position="53"/>
    </location>
</feature>
<feature type="helix" evidence="21">
    <location>
        <begin position="58"/>
        <end position="77"/>
    </location>
</feature>
<feature type="helix" evidence="21">
    <location>
        <begin position="83"/>
        <end position="93"/>
    </location>
</feature>
<feature type="strand" evidence="21">
    <location>
        <begin position="96"/>
        <end position="99"/>
    </location>
</feature>
<feature type="helix" evidence="21">
    <location>
        <begin position="106"/>
        <end position="118"/>
    </location>
</feature>
<feature type="turn" evidence="19">
    <location>
        <begin position="119"/>
        <end position="122"/>
    </location>
</feature>
<feature type="strand" evidence="21">
    <location>
        <begin position="124"/>
        <end position="130"/>
    </location>
</feature>
<feature type="helix" evidence="21">
    <location>
        <begin position="131"/>
        <end position="147"/>
    </location>
</feature>
<feature type="strand" evidence="21">
    <location>
        <begin position="152"/>
        <end position="154"/>
    </location>
</feature>
<feature type="strand" evidence="22">
    <location>
        <begin position="157"/>
        <end position="159"/>
    </location>
</feature>
<feature type="helix" evidence="21">
    <location>
        <begin position="161"/>
        <end position="169"/>
    </location>
</feature>
<feature type="strand" evidence="21">
    <location>
        <begin position="170"/>
        <end position="176"/>
    </location>
</feature>
<feature type="helix" evidence="21">
    <location>
        <begin position="177"/>
        <end position="187"/>
    </location>
</feature>
<feature type="helix" evidence="21">
    <location>
        <begin position="193"/>
        <end position="195"/>
    </location>
</feature>
<feature type="strand" evidence="21">
    <location>
        <begin position="203"/>
        <end position="207"/>
    </location>
</feature>
<feature type="helix" evidence="21">
    <location>
        <begin position="209"/>
        <end position="213"/>
    </location>
</feature>
<feature type="turn" evidence="21">
    <location>
        <begin position="214"/>
        <end position="218"/>
    </location>
</feature>
<feature type="strand" evidence="21">
    <location>
        <begin position="220"/>
        <end position="228"/>
    </location>
</feature>
<feature type="helix" evidence="21">
    <location>
        <begin position="232"/>
        <end position="241"/>
    </location>
</feature>
<feature type="turn" evidence="23">
    <location>
        <begin position="242"/>
        <end position="244"/>
    </location>
</feature>
<feature type="strand" evidence="21">
    <location>
        <begin position="246"/>
        <end position="250"/>
    </location>
</feature>
<feature type="strand" evidence="21">
    <location>
        <begin position="254"/>
        <end position="256"/>
    </location>
</feature>
<feature type="strand" evidence="25">
    <location>
        <begin position="258"/>
        <end position="261"/>
    </location>
</feature>
<feature type="helix" evidence="21">
    <location>
        <begin position="263"/>
        <end position="272"/>
    </location>
</feature>
<feature type="turn" evidence="19">
    <location>
        <begin position="275"/>
        <end position="277"/>
    </location>
</feature>
<feature type="strand" evidence="20">
    <location>
        <begin position="278"/>
        <end position="280"/>
    </location>
</feature>
<feature type="helix" evidence="21">
    <location>
        <begin position="281"/>
        <end position="283"/>
    </location>
</feature>
<feature type="helix" evidence="21">
    <location>
        <begin position="284"/>
        <end position="298"/>
    </location>
</feature>
<feature type="turn" evidence="21">
    <location>
        <begin position="302"/>
        <end position="304"/>
    </location>
</feature>
<feature type="strand" evidence="21">
    <location>
        <begin position="305"/>
        <end position="309"/>
    </location>
</feature>
<feature type="strand" evidence="21">
    <location>
        <begin position="312"/>
        <end position="316"/>
    </location>
</feature>
<feature type="turn" evidence="21">
    <location>
        <begin position="318"/>
        <end position="320"/>
    </location>
</feature>
<feature type="strand" evidence="26">
    <location>
        <begin position="325"/>
        <end position="329"/>
    </location>
</feature>
<feature type="helix" evidence="19">
    <location>
        <begin position="330"/>
        <end position="332"/>
    </location>
</feature>
<feature type="helix" evidence="21">
    <location>
        <begin position="333"/>
        <end position="340"/>
    </location>
</feature>
<feature type="strand" evidence="21">
    <location>
        <begin position="349"/>
        <end position="356"/>
    </location>
</feature>
<feature type="helix" evidence="21">
    <location>
        <begin position="357"/>
        <end position="361"/>
    </location>
</feature>
<feature type="strand" evidence="21">
    <location>
        <begin position="364"/>
        <end position="372"/>
    </location>
</feature>
<feature type="helix" evidence="21">
    <location>
        <begin position="375"/>
        <end position="377"/>
    </location>
</feature>
<feature type="helix" evidence="21">
    <location>
        <begin position="378"/>
        <end position="385"/>
    </location>
</feature>
<feature type="strand" evidence="21">
    <location>
        <begin position="389"/>
        <end position="391"/>
    </location>
</feature>
<feature type="strand" evidence="24">
    <location>
        <begin position="399"/>
        <end position="402"/>
    </location>
</feature>
<feature type="strand" evidence="21">
    <location>
        <begin position="406"/>
        <end position="410"/>
    </location>
</feature>
<feature type="helix" evidence="21">
    <location>
        <begin position="411"/>
        <end position="427"/>
    </location>
</feature>
<feature type="strand" evidence="21">
    <location>
        <begin position="432"/>
        <end position="437"/>
    </location>
</feature>
<feature type="helix" evidence="21">
    <location>
        <begin position="439"/>
        <end position="450"/>
    </location>
</feature>
<feature type="turn" evidence="21">
    <location>
        <begin position="451"/>
        <end position="453"/>
    </location>
</feature>
<feature type="strand" evidence="21">
    <location>
        <begin position="457"/>
        <end position="459"/>
    </location>
</feature>
<feature type="strand" evidence="19">
    <location>
        <begin position="461"/>
        <end position="463"/>
    </location>
</feature>
<feature type="helix" evidence="21">
    <location>
        <begin position="464"/>
        <end position="471"/>
    </location>
</feature>
<feature type="turn" evidence="21">
    <location>
        <begin position="472"/>
        <end position="475"/>
    </location>
</feature>
<feature type="strand" evidence="21">
    <location>
        <begin position="480"/>
        <end position="484"/>
    </location>
</feature>
<feature type="turn" evidence="25">
    <location>
        <begin position="485"/>
        <end position="490"/>
    </location>
</feature>
<feature type="turn" evidence="25">
    <location>
        <begin position="497"/>
        <end position="499"/>
    </location>
</feature>
<feature type="helix" evidence="21">
    <location>
        <begin position="500"/>
        <end position="502"/>
    </location>
</feature>
<feature type="strand" evidence="21">
    <location>
        <begin position="504"/>
        <end position="511"/>
    </location>
</feature>
<feature type="helix" evidence="21">
    <location>
        <begin position="516"/>
        <end position="523"/>
    </location>
</feature>
<feature type="turn" evidence="27">
    <location>
        <begin position="524"/>
        <end position="526"/>
    </location>
</feature>
<feature type="helix" evidence="21">
    <location>
        <begin position="528"/>
        <end position="530"/>
    </location>
</feature>
<feature type="strand" evidence="21">
    <location>
        <begin position="533"/>
        <end position="540"/>
    </location>
</feature>
<feature type="strand" evidence="27">
    <location>
        <begin position="541"/>
        <end position="543"/>
    </location>
</feature>
<feature type="helix" evidence="21">
    <location>
        <begin position="545"/>
        <end position="547"/>
    </location>
</feature>
<feature type="helix" evidence="21">
    <location>
        <begin position="550"/>
        <end position="561"/>
    </location>
</feature>
<feature type="strand" evidence="21">
    <location>
        <begin position="565"/>
        <end position="567"/>
    </location>
</feature>
<feature type="helix" evidence="21">
    <location>
        <begin position="572"/>
        <end position="618"/>
    </location>
</feature>
<feature type="strand" evidence="22">
    <location>
        <begin position="621"/>
        <end position="623"/>
    </location>
</feature>
<feature type="helix" evidence="21">
    <location>
        <begin position="624"/>
        <end position="641"/>
    </location>
</feature>
<feature type="strand" evidence="24">
    <location>
        <begin position="645"/>
        <end position="648"/>
    </location>
</feature>
<feature type="helix" evidence="19">
    <location>
        <begin position="649"/>
        <end position="651"/>
    </location>
</feature>
<feature type="helix" evidence="21">
    <location>
        <begin position="657"/>
        <end position="662"/>
    </location>
</feature>
<feature type="turn" evidence="21">
    <location>
        <begin position="663"/>
        <end position="665"/>
    </location>
</feature>
<feature type="strand" evidence="19">
    <location>
        <begin position="668"/>
        <end position="671"/>
    </location>
</feature>
<feature type="strand" evidence="21">
    <location>
        <begin position="672"/>
        <end position="675"/>
    </location>
</feature>
<feature type="helix" evidence="21">
    <location>
        <begin position="681"/>
        <end position="702"/>
    </location>
</feature>
<feature type="turn" evidence="22">
    <location>
        <begin position="704"/>
        <end position="706"/>
    </location>
</feature>
<feature type="helix" evidence="21">
    <location>
        <begin position="707"/>
        <end position="736"/>
    </location>
</feature>
<feature type="helix" evidence="21">
    <location>
        <begin position="738"/>
        <end position="740"/>
    </location>
</feature>
<feature type="strand" evidence="21">
    <location>
        <begin position="744"/>
        <end position="746"/>
    </location>
</feature>
<feature type="helix" evidence="21">
    <location>
        <begin position="748"/>
        <end position="776"/>
    </location>
</feature>
<feature type="strand" evidence="19">
    <location>
        <begin position="794"/>
        <end position="797"/>
    </location>
</feature>
<organism>
    <name type="scientific">Bacillus subtilis (strain 168)</name>
    <dbReference type="NCBI Taxonomy" id="224308"/>
    <lineage>
        <taxon>Bacteria</taxon>
        <taxon>Bacillati</taxon>
        <taxon>Bacillota</taxon>
        <taxon>Bacilli</taxon>
        <taxon>Bacillales</taxon>
        <taxon>Bacillaceae</taxon>
        <taxon>Bacillus</taxon>
    </lineage>
</organism>
<accession>P28366</accession>
<protein>
    <recommendedName>
        <fullName evidence="1">Protein translocase subunit SecA</fullName>
        <ecNumber evidence="1 11">7.4.2.8</ecNumber>
    </recommendedName>
</protein>
<name>SECA_BACSU</name>
<comment type="function">
    <text evidence="1">Part of the Sec protein translocase complex. Interacts with the SecYEG preprotein conducting channel. Has a central role in coupling the hydrolysis of ATP to the transfer of proteins into and across the cell membrane, serving as an ATP-driven molecular motor driving the stepwise translocation of polypeptide chains across the membrane.</text>
</comment>
<comment type="catalytic activity">
    <reaction evidence="1 11">
        <text>ATP + H2O + cellular proteinSide 1 = ADP + phosphate + cellular proteinSide 2.</text>
        <dbReference type="EC" id="7.4.2.8"/>
    </reaction>
</comment>
<comment type="cofactor">
    <cofactor evidence="1">
        <name>Zn(2+)</name>
        <dbReference type="ChEBI" id="CHEBI:29105"/>
    </cofactor>
    <text evidence="1">May bind 1 zinc ion per subunit.</text>
</comment>
<comment type="subunit">
    <text evidence="5 6 8">Part of the essential Sec protein translocation apparatus which comprises SecA, SecYEG and auxiliary proteins SecDF. Other proteins may be involved. Monomer and many different homodimers can be isolated (PubMed:16989859), some of which are not formed in the presence of a synthetic signal peptide. A single SecA monomer interacts with SecY in the channel. Only shows some colocalization with FloA or FloT membrane assemblies (PubMed:27362352).</text>
</comment>
<comment type="subcellular location">
    <subcellularLocation>
        <location evidence="1 8">Cell membrane</location>
        <topology evidence="1">Peripheral membrane protein</topology>
        <orientation evidence="1">Cytoplasmic side</orientation>
    </subcellularLocation>
    <subcellularLocation>
        <location evidence="1">Cytoplasm</location>
    </subcellularLocation>
    <subcellularLocation>
        <location evidence="8">Membrane raft</location>
    </subcellularLocation>
    <text evidence="1">Distribution is 50-50.</text>
</comment>
<comment type="similarity">
    <text evidence="1">Belongs to the SecA family.</text>
</comment>
<gene>
    <name evidence="1" type="primary">secA</name>
    <name type="synonym">div+</name>
    <name type="ordered locus">BSU35300</name>
</gene>
<keyword id="KW-0002">3D-structure</keyword>
<keyword id="KW-0067">ATP-binding</keyword>
<keyword id="KW-1003">Cell membrane</keyword>
<keyword id="KW-0963">Cytoplasm</keyword>
<keyword id="KW-0472">Membrane</keyword>
<keyword id="KW-0479">Metal-binding</keyword>
<keyword id="KW-0547">Nucleotide-binding</keyword>
<keyword id="KW-0653">Protein transport</keyword>
<keyword id="KW-1185">Reference proteome</keyword>
<keyword id="KW-1278">Translocase</keyword>
<keyword id="KW-0811">Translocation</keyword>
<keyword id="KW-0813">Transport</keyword>
<keyword id="KW-0862">Zinc</keyword>
<dbReference type="EC" id="7.4.2.8" evidence="1 11"/>
<dbReference type="EMBL" id="D10279">
    <property type="protein sequence ID" value="BAA01122.1"/>
    <property type="molecule type" value="Genomic_DNA"/>
</dbReference>
<dbReference type="EMBL" id="U56901">
    <property type="protein sequence ID" value="AAC44957.1"/>
    <property type="molecule type" value="Genomic_DNA"/>
</dbReference>
<dbReference type="EMBL" id="AL009126">
    <property type="protein sequence ID" value="CAB15547.1"/>
    <property type="molecule type" value="Genomic_DNA"/>
</dbReference>
<dbReference type="EMBL" id="X62035">
    <property type="protein sequence ID" value="CAA43977.1"/>
    <property type="molecule type" value="Genomic_DNA"/>
</dbReference>
<dbReference type="PIR" id="JQ0647">
    <property type="entry name" value="JQ0647"/>
</dbReference>
<dbReference type="RefSeq" id="NP_391410.1">
    <property type="nucleotide sequence ID" value="NC_000964.3"/>
</dbReference>
<dbReference type="RefSeq" id="WP_003228033.1">
    <property type="nucleotide sequence ID" value="NZ_OZ025638.1"/>
</dbReference>
<dbReference type="PDB" id="1M6N">
    <property type="method" value="X-ray"/>
    <property type="resolution" value="2.70 A"/>
    <property type="chains" value="A=1-802"/>
</dbReference>
<dbReference type="PDB" id="1M74">
    <property type="method" value="X-ray"/>
    <property type="resolution" value="3.00 A"/>
    <property type="chains" value="A=1-802"/>
</dbReference>
<dbReference type="PDB" id="1TF2">
    <property type="method" value="X-ray"/>
    <property type="resolution" value="2.90 A"/>
    <property type="chains" value="A=1-841"/>
</dbReference>
<dbReference type="PDB" id="1TF5">
    <property type="method" value="X-ray"/>
    <property type="resolution" value="2.18 A"/>
    <property type="chains" value="A=1-841"/>
</dbReference>
<dbReference type="PDB" id="2IBM">
    <property type="method" value="X-ray"/>
    <property type="resolution" value="3.20 A"/>
    <property type="chains" value="A/B=1-780"/>
</dbReference>
<dbReference type="PDB" id="3DL8">
    <property type="method" value="X-ray"/>
    <property type="resolution" value="7.50 A"/>
    <property type="chains" value="A/B=1-779"/>
</dbReference>
<dbReference type="PDB" id="3IQM">
    <property type="method" value="X-ray"/>
    <property type="resolution" value="3.40 A"/>
    <property type="chains" value="A=1-802"/>
</dbReference>
<dbReference type="PDB" id="3IQY">
    <property type="method" value="X-ray"/>
    <property type="resolution" value="3.30 A"/>
    <property type="chains" value="A=1-841"/>
</dbReference>
<dbReference type="PDB" id="3JV2">
    <property type="method" value="X-ray"/>
    <property type="resolution" value="2.50 A"/>
    <property type="chains" value="A/B=1-780"/>
</dbReference>
<dbReference type="PDB" id="5EUL">
    <property type="method" value="X-ray"/>
    <property type="resolution" value="3.70 A"/>
    <property type="chains" value="A=1-780"/>
</dbReference>
<dbReference type="PDB" id="6ITC">
    <property type="method" value="EM"/>
    <property type="resolution" value="3.45 A"/>
    <property type="chains" value="A=1-780"/>
</dbReference>
<dbReference type="PDB" id="7XHA">
    <property type="method" value="EM"/>
    <property type="resolution" value="3.35 A"/>
    <property type="chains" value="A=1-778"/>
</dbReference>
<dbReference type="PDB" id="7XHB">
    <property type="method" value="EM"/>
    <property type="resolution" value="3.33 A"/>
    <property type="chains" value="A=1-778"/>
</dbReference>
<dbReference type="PDB" id="8Y9Y">
    <property type="method" value="EM"/>
    <property type="resolution" value="3.29 A"/>
    <property type="chains" value="A=1-778"/>
</dbReference>
<dbReference type="PDB" id="8Y9Z">
    <property type="method" value="EM"/>
    <property type="resolution" value="3.41 A"/>
    <property type="chains" value="A=1-778"/>
</dbReference>
<dbReference type="PDB" id="8YA0">
    <property type="method" value="EM"/>
    <property type="resolution" value="2.97 A"/>
    <property type="chains" value="A=14-778"/>
</dbReference>
<dbReference type="PDB" id="8YA2">
    <property type="method" value="EM"/>
    <property type="resolution" value="3.84 A"/>
    <property type="chains" value="A=1-778"/>
</dbReference>
<dbReference type="PDB" id="8YAS">
    <property type="method" value="EM"/>
    <property type="resolution" value="3.97 A"/>
    <property type="chains" value="A=1-778"/>
</dbReference>
<dbReference type="PDBsum" id="1M6N"/>
<dbReference type="PDBsum" id="1M74"/>
<dbReference type="PDBsum" id="1TF2"/>
<dbReference type="PDBsum" id="1TF5"/>
<dbReference type="PDBsum" id="2IBM"/>
<dbReference type="PDBsum" id="3DL8"/>
<dbReference type="PDBsum" id="3IQM"/>
<dbReference type="PDBsum" id="3IQY"/>
<dbReference type="PDBsum" id="3JV2"/>
<dbReference type="PDBsum" id="5EUL"/>
<dbReference type="PDBsum" id="6ITC"/>
<dbReference type="PDBsum" id="7XHA"/>
<dbReference type="PDBsum" id="7XHB"/>
<dbReference type="PDBsum" id="8Y9Y"/>
<dbReference type="PDBsum" id="8Y9Z"/>
<dbReference type="PDBsum" id="8YA0"/>
<dbReference type="PDBsum" id="8YA2"/>
<dbReference type="PDBsum" id="8YAS"/>
<dbReference type="EMDB" id="EMD-33192"/>
<dbReference type="EMDB" id="EMD-33193"/>
<dbReference type="EMDB" id="EMD-39085"/>
<dbReference type="EMDB" id="EMD-39086"/>
<dbReference type="EMDB" id="EMD-39087"/>
<dbReference type="EMDB" id="EMD-39088"/>
<dbReference type="EMDB" id="EMD-39106"/>
<dbReference type="EMDB" id="EMD-9731"/>
<dbReference type="SMR" id="P28366"/>
<dbReference type="DIP" id="DIP-59805N"/>
<dbReference type="FunCoup" id="P28366">
    <property type="interactions" value="626"/>
</dbReference>
<dbReference type="IntAct" id="P28366">
    <property type="interactions" value="7"/>
</dbReference>
<dbReference type="MINT" id="P28366"/>
<dbReference type="STRING" id="224308.BSU35300"/>
<dbReference type="TCDB" id="3.A.5.2.1">
    <property type="family name" value="the general secretory pathway (sec) family"/>
</dbReference>
<dbReference type="jPOST" id="P28366"/>
<dbReference type="PaxDb" id="224308-BSU35300"/>
<dbReference type="EnsemblBacteria" id="CAB15547">
    <property type="protein sequence ID" value="CAB15547"/>
    <property type="gene ID" value="BSU_35300"/>
</dbReference>
<dbReference type="GeneID" id="936711"/>
<dbReference type="KEGG" id="bsu:BSU35300"/>
<dbReference type="PATRIC" id="fig|224308.179.peg.3820"/>
<dbReference type="eggNOG" id="COG0653">
    <property type="taxonomic scope" value="Bacteria"/>
</dbReference>
<dbReference type="InParanoid" id="P28366"/>
<dbReference type="OrthoDB" id="9805579at2"/>
<dbReference type="PhylomeDB" id="P28366"/>
<dbReference type="BioCyc" id="BSUB:BSU35300-MONOMER"/>
<dbReference type="BRENDA" id="7.4.2.5">
    <property type="organism ID" value="658"/>
</dbReference>
<dbReference type="EvolutionaryTrace" id="P28366"/>
<dbReference type="Proteomes" id="UP000001570">
    <property type="component" value="Chromosome"/>
</dbReference>
<dbReference type="GO" id="GO:0031522">
    <property type="term" value="C:cell envelope Sec protein transport complex"/>
    <property type="evidence" value="ECO:0000318"/>
    <property type="project" value="GO_Central"/>
</dbReference>
<dbReference type="GO" id="GO:0005737">
    <property type="term" value="C:cytoplasm"/>
    <property type="evidence" value="ECO:0007669"/>
    <property type="project" value="UniProtKB-SubCell"/>
</dbReference>
<dbReference type="GO" id="GO:0045121">
    <property type="term" value="C:membrane raft"/>
    <property type="evidence" value="ECO:0007669"/>
    <property type="project" value="UniProtKB-SubCell"/>
</dbReference>
<dbReference type="GO" id="GO:0005886">
    <property type="term" value="C:plasma membrane"/>
    <property type="evidence" value="ECO:0000318"/>
    <property type="project" value="GO_Central"/>
</dbReference>
<dbReference type="GO" id="GO:0005524">
    <property type="term" value="F:ATP binding"/>
    <property type="evidence" value="ECO:0000318"/>
    <property type="project" value="GO_Central"/>
</dbReference>
<dbReference type="GO" id="GO:0046872">
    <property type="term" value="F:metal ion binding"/>
    <property type="evidence" value="ECO:0007669"/>
    <property type="project" value="UniProtKB-KW"/>
</dbReference>
<dbReference type="GO" id="GO:0008564">
    <property type="term" value="F:protein-exporting ATPase activity"/>
    <property type="evidence" value="ECO:0007669"/>
    <property type="project" value="UniProtKB-EC"/>
</dbReference>
<dbReference type="GO" id="GO:0065002">
    <property type="term" value="P:intracellular protein transmembrane transport"/>
    <property type="evidence" value="ECO:0007669"/>
    <property type="project" value="UniProtKB-UniRule"/>
</dbReference>
<dbReference type="GO" id="GO:0017038">
    <property type="term" value="P:protein import"/>
    <property type="evidence" value="ECO:0007669"/>
    <property type="project" value="InterPro"/>
</dbReference>
<dbReference type="GO" id="GO:0006605">
    <property type="term" value="P:protein targeting"/>
    <property type="evidence" value="ECO:0007669"/>
    <property type="project" value="UniProtKB-UniRule"/>
</dbReference>
<dbReference type="GO" id="GO:0043952">
    <property type="term" value="P:protein transport by the Sec complex"/>
    <property type="evidence" value="ECO:0000318"/>
    <property type="project" value="GO_Central"/>
</dbReference>
<dbReference type="CDD" id="cd17928">
    <property type="entry name" value="DEXDc_SecA"/>
    <property type="match status" value="1"/>
</dbReference>
<dbReference type="CDD" id="cd18803">
    <property type="entry name" value="SF2_C_secA"/>
    <property type="match status" value="1"/>
</dbReference>
<dbReference type="FunFam" id="1.10.3060.10:FF:000002">
    <property type="entry name" value="Preprotein translocase subunit SecA"/>
    <property type="match status" value="1"/>
</dbReference>
<dbReference type="FunFam" id="3.40.50.300:FF:000081">
    <property type="entry name" value="Preprotein translocase subunit SecA"/>
    <property type="match status" value="1"/>
</dbReference>
<dbReference type="FunFam" id="3.40.50.300:FF:000429">
    <property type="entry name" value="Preprotein translocase subunit SecA"/>
    <property type="match status" value="1"/>
</dbReference>
<dbReference type="FunFam" id="3.90.1440.10:FF:000001">
    <property type="entry name" value="Preprotein translocase subunit SecA"/>
    <property type="match status" value="1"/>
</dbReference>
<dbReference type="Gene3D" id="1.10.3060.10">
    <property type="entry name" value="Helical scaffold and wing domains of SecA"/>
    <property type="match status" value="1"/>
</dbReference>
<dbReference type="Gene3D" id="3.40.50.300">
    <property type="entry name" value="P-loop containing nucleotide triphosphate hydrolases"/>
    <property type="match status" value="3"/>
</dbReference>
<dbReference type="Gene3D" id="3.90.1440.10">
    <property type="entry name" value="SecA, preprotein cross-linking domain"/>
    <property type="match status" value="1"/>
</dbReference>
<dbReference type="HAMAP" id="MF_01382">
    <property type="entry name" value="SecA"/>
    <property type="match status" value="1"/>
</dbReference>
<dbReference type="InterPro" id="IPR014001">
    <property type="entry name" value="Helicase_ATP-bd"/>
</dbReference>
<dbReference type="InterPro" id="IPR001650">
    <property type="entry name" value="Helicase_C-like"/>
</dbReference>
<dbReference type="InterPro" id="IPR027417">
    <property type="entry name" value="P-loop_NTPase"/>
</dbReference>
<dbReference type="InterPro" id="IPR004027">
    <property type="entry name" value="SEC_C_motif"/>
</dbReference>
<dbReference type="InterPro" id="IPR000185">
    <property type="entry name" value="SecA"/>
</dbReference>
<dbReference type="InterPro" id="IPR020937">
    <property type="entry name" value="SecA_CS"/>
</dbReference>
<dbReference type="InterPro" id="IPR011115">
    <property type="entry name" value="SecA_DEAD"/>
</dbReference>
<dbReference type="InterPro" id="IPR014018">
    <property type="entry name" value="SecA_motor_DEAD"/>
</dbReference>
<dbReference type="InterPro" id="IPR011130">
    <property type="entry name" value="SecA_preprotein_X-link_dom"/>
</dbReference>
<dbReference type="InterPro" id="IPR044722">
    <property type="entry name" value="SecA_SF2_C"/>
</dbReference>
<dbReference type="InterPro" id="IPR011116">
    <property type="entry name" value="SecA_Wing/Scaffold"/>
</dbReference>
<dbReference type="InterPro" id="IPR036266">
    <property type="entry name" value="SecA_Wing/Scaffold_sf"/>
</dbReference>
<dbReference type="InterPro" id="IPR036670">
    <property type="entry name" value="SecA_X-link_sf"/>
</dbReference>
<dbReference type="NCBIfam" id="NF006630">
    <property type="entry name" value="PRK09200.1"/>
    <property type="match status" value="1"/>
</dbReference>
<dbReference type="NCBIfam" id="NF009538">
    <property type="entry name" value="PRK12904.1"/>
    <property type="match status" value="1"/>
</dbReference>
<dbReference type="NCBIfam" id="TIGR00963">
    <property type="entry name" value="secA"/>
    <property type="match status" value="1"/>
</dbReference>
<dbReference type="PANTHER" id="PTHR30612:SF0">
    <property type="entry name" value="CHLOROPLAST PROTEIN-TRANSPORTING ATPASE"/>
    <property type="match status" value="1"/>
</dbReference>
<dbReference type="PANTHER" id="PTHR30612">
    <property type="entry name" value="SECA INNER MEMBRANE COMPONENT OF SEC PROTEIN SECRETION SYSTEM"/>
    <property type="match status" value="1"/>
</dbReference>
<dbReference type="Pfam" id="PF21090">
    <property type="entry name" value="P-loop_SecA"/>
    <property type="match status" value="1"/>
</dbReference>
<dbReference type="Pfam" id="PF02810">
    <property type="entry name" value="SEC-C"/>
    <property type="match status" value="1"/>
</dbReference>
<dbReference type="Pfam" id="PF07517">
    <property type="entry name" value="SecA_DEAD"/>
    <property type="match status" value="1"/>
</dbReference>
<dbReference type="Pfam" id="PF01043">
    <property type="entry name" value="SecA_PP_bind"/>
    <property type="match status" value="1"/>
</dbReference>
<dbReference type="Pfam" id="PF07516">
    <property type="entry name" value="SecA_SW"/>
    <property type="match status" value="1"/>
</dbReference>
<dbReference type="PRINTS" id="PR00906">
    <property type="entry name" value="SECA"/>
</dbReference>
<dbReference type="SMART" id="SM00957">
    <property type="entry name" value="SecA_DEAD"/>
    <property type="match status" value="1"/>
</dbReference>
<dbReference type="SMART" id="SM00958">
    <property type="entry name" value="SecA_PP_bind"/>
    <property type="match status" value="1"/>
</dbReference>
<dbReference type="SUPFAM" id="SSF81886">
    <property type="entry name" value="Helical scaffold and wing domains of SecA"/>
    <property type="match status" value="1"/>
</dbReference>
<dbReference type="SUPFAM" id="SSF52540">
    <property type="entry name" value="P-loop containing nucleoside triphosphate hydrolases"/>
    <property type="match status" value="2"/>
</dbReference>
<dbReference type="SUPFAM" id="SSF81767">
    <property type="entry name" value="Pre-protein crosslinking domain of SecA"/>
    <property type="match status" value="1"/>
</dbReference>
<dbReference type="PROSITE" id="PS01312">
    <property type="entry name" value="SECA"/>
    <property type="match status" value="1"/>
</dbReference>
<dbReference type="PROSITE" id="PS51196">
    <property type="entry name" value="SECA_MOTOR_DEAD"/>
    <property type="match status" value="1"/>
</dbReference>